<keyword id="KW-0997">Cell inner membrane</keyword>
<keyword id="KW-1003">Cell membrane</keyword>
<keyword id="KW-0472">Membrane</keyword>
<keyword id="KW-0602">Photosynthesis</keyword>
<keyword id="KW-0604">Photosystem II</keyword>
<keyword id="KW-1185">Reference proteome</keyword>
<keyword id="KW-0812">Transmembrane</keyword>
<keyword id="KW-1133">Transmembrane helix</keyword>
<dbReference type="EMBL" id="BA000045">
    <property type="protein sequence ID" value="BAC89815.1"/>
    <property type="molecule type" value="Genomic_DNA"/>
</dbReference>
<dbReference type="RefSeq" id="NP_924820.1">
    <property type="nucleotide sequence ID" value="NC_005125.1"/>
</dbReference>
<dbReference type="RefSeq" id="WP_011141872.1">
    <property type="nucleotide sequence ID" value="NC_005125.1"/>
</dbReference>
<dbReference type="SMR" id="Q7NJF8"/>
<dbReference type="STRING" id="251221.gene:10759366"/>
<dbReference type="EnsemblBacteria" id="BAC89815">
    <property type="protein sequence ID" value="BAC89815"/>
    <property type="gene ID" value="BAC89815"/>
</dbReference>
<dbReference type="KEGG" id="gvi:gsr1874"/>
<dbReference type="HOGENOM" id="CLU_212837_0_1_3"/>
<dbReference type="InParanoid" id="Q7NJF8"/>
<dbReference type="Proteomes" id="UP000000557">
    <property type="component" value="Chromosome"/>
</dbReference>
<dbReference type="GO" id="GO:0009523">
    <property type="term" value="C:photosystem II"/>
    <property type="evidence" value="ECO:0007669"/>
    <property type="project" value="UniProtKB-KW"/>
</dbReference>
<dbReference type="GO" id="GO:0005886">
    <property type="term" value="C:plasma membrane"/>
    <property type="evidence" value="ECO:0007669"/>
    <property type="project" value="UniProtKB-SubCell"/>
</dbReference>
<dbReference type="GO" id="GO:0015979">
    <property type="term" value="P:photosynthesis"/>
    <property type="evidence" value="ECO:0007669"/>
    <property type="project" value="UniProtKB-UniRule"/>
</dbReference>
<dbReference type="Gene3D" id="1.20.5.510">
    <property type="entry name" value="Single helix bin"/>
    <property type="match status" value="1"/>
</dbReference>
<dbReference type="HAMAP" id="MF_01386">
    <property type="entry name" value="PSII_PsbX_1"/>
    <property type="match status" value="1"/>
</dbReference>
<dbReference type="InterPro" id="IPR009518">
    <property type="entry name" value="PSII_PsbX"/>
</dbReference>
<dbReference type="InterPro" id="IPR023431">
    <property type="entry name" value="PSII_PsbX_type_1_subfam"/>
</dbReference>
<dbReference type="Pfam" id="PF06596">
    <property type="entry name" value="PsbX"/>
    <property type="match status" value="1"/>
</dbReference>
<reference key="1">
    <citation type="journal article" date="2003" name="DNA Res.">
        <title>Complete genome structure of Gloeobacter violaceus PCC 7421, a cyanobacterium that lacks thylakoids.</title>
        <authorList>
            <person name="Nakamura Y."/>
            <person name="Kaneko T."/>
            <person name="Sato S."/>
            <person name="Mimuro M."/>
            <person name="Miyashita H."/>
            <person name="Tsuchiya T."/>
            <person name="Sasamoto S."/>
            <person name="Watanabe A."/>
            <person name="Kawashima K."/>
            <person name="Kishida Y."/>
            <person name="Kiyokawa C."/>
            <person name="Kohara M."/>
            <person name="Matsumoto M."/>
            <person name="Matsuno A."/>
            <person name="Nakazaki N."/>
            <person name="Shimpo S."/>
            <person name="Takeuchi C."/>
            <person name="Yamada M."/>
            <person name="Tabata S."/>
        </authorList>
    </citation>
    <scope>NUCLEOTIDE SEQUENCE [LARGE SCALE GENOMIC DNA]</scope>
    <source>
        <strain>ATCC 29082 / PCC 7421</strain>
    </source>
</reference>
<protein>
    <recommendedName>
        <fullName evidence="1">Photosystem II reaction center protein X</fullName>
    </recommendedName>
</protein>
<sequence>MTATLSNFLWSIFWGGVVVALGAAALTAISRIDRIR</sequence>
<gene>
    <name evidence="1" type="primary">psbX</name>
    <name type="ordered locus">gsr1874</name>
</gene>
<evidence type="ECO:0000255" key="1">
    <source>
        <dbReference type="HAMAP-Rule" id="MF_01386"/>
    </source>
</evidence>
<evidence type="ECO:0000305" key="2">
    <source>
    </source>
</evidence>
<organism>
    <name type="scientific">Gloeobacter violaceus (strain ATCC 29082 / PCC 7421)</name>
    <dbReference type="NCBI Taxonomy" id="251221"/>
    <lineage>
        <taxon>Bacteria</taxon>
        <taxon>Bacillati</taxon>
        <taxon>Cyanobacteriota</taxon>
        <taxon>Cyanophyceae</taxon>
        <taxon>Gloeobacterales</taxon>
        <taxon>Gloeobacteraceae</taxon>
        <taxon>Gloeobacter</taxon>
    </lineage>
</organism>
<proteinExistence type="inferred from homology"/>
<name>PSBX_GLOVI</name>
<feature type="chain" id="PRO_0000345365" description="Photosystem II reaction center protein X">
    <location>
        <begin position="1"/>
        <end position="36"/>
    </location>
</feature>
<feature type="transmembrane region" description="Helical" evidence="1">
    <location>
        <begin position="9"/>
        <end position="29"/>
    </location>
</feature>
<accession>Q7NJF8</accession>
<comment type="function">
    <text evidence="1">Involved in the binding and/or turnover of quinones at the Q(B) site of photosystem II (PSII). PSII is a light-driven water plastoquinone oxidoreductase, using light energy to abstract electrons from H(2)O, generating a proton gradient subsequently used for ATP formation.</text>
</comment>
<comment type="subunit">
    <text evidence="2">PSII is composed of 1 copy each of membrane proteins PsbA, PsbB, PsbC, PsbD, PsbE, PsbF, PsbH, PsbI, PsbJ, PsbK, PsbL, PsbM, PsbT, PsbX, Psb30/Ycf12, peripheral proteins PsbO, CyanoQ (PsbQ), PsbU, PsbV and a large number of cofactors. It forms dimeric complexes.</text>
</comment>
<comment type="subcellular location">
    <subcellularLocation>
        <location evidence="1">Cell inner membrane</location>
        <topology evidence="1">Single-pass membrane protein</topology>
    </subcellularLocation>
</comment>
<comment type="similarity">
    <text evidence="1">Belongs to the PsbX family. Type 1 subfamily.</text>
</comment>